<comment type="function">
    <text evidence="1">May be involved in RNA polymerase activity.</text>
</comment>
<comment type="catalytic activity">
    <reaction>
        <text>RNA(n) + a ribonucleoside 5'-triphosphate = RNA(n+1) + diphosphate</text>
        <dbReference type="Rhea" id="RHEA:21248"/>
        <dbReference type="Rhea" id="RHEA-COMP:14527"/>
        <dbReference type="Rhea" id="RHEA-COMP:17342"/>
        <dbReference type="ChEBI" id="CHEBI:33019"/>
        <dbReference type="ChEBI" id="CHEBI:61557"/>
        <dbReference type="ChEBI" id="CHEBI:140395"/>
        <dbReference type="EC" id="2.7.7.6"/>
    </reaction>
</comment>
<comment type="subcellular location">
    <subcellularLocation>
        <location>Plastid</location>
        <location>Chloroplast</location>
    </subcellularLocation>
</comment>
<comment type="similarity">
    <text evidence="2">Belongs to the RNA polymerase subunit omega family.</text>
</comment>
<feature type="chain" id="PRO_0000129025" description="Putative DNA-directed RNA polymerase subunit omega">
    <location>
        <begin position="1"/>
        <end position="75"/>
    </location>
</feature>
<sequence length="75" mass="8742">MNHHNSLDSSDITYKTEELLEATTNRYKITVQVANRAKRRKYEDVDIIDDPQIKPVIRAILEMVDEITQPEIISD</sequence>
<name>RPOZ_PORPU</name>
<geneLocation type="chloroplast"/>
<organism>
    <name type="scientific">Porphyra purpurea</name>
    <name type="common">Red seaweed</name>
    <name type="synonym">Ulva purpurea</name>
    <dbReference type="NCBI Taxonomy" id="2787"/>
    <lineage>
        <taxon>Eukaryota</taxon>
        <taxon>Rhodophyta</taxon>
        <taxon>Bangiophyceae</taxon>
        <taxon>Bangiales</taxon>
        <taxon>Bangiaceae</taxon>
        <taxon>Porphyra</taxon>
    </lineage>
</organism>
<evidence type="ECO:0000250" key="1"/>
<evidence type="ECO:0000305" key="2"/>
<gene>
    <name type="primary">rpoZ</name>
    <name type="synonym">ycf61</name>
</gene>
<proteinExistence type="inferred from homology"/>
<keyword id="KW-0150">Chloroplast</keyword>
<keyword id="KW-0240">DNA-directed RNA polymerase</keyword>
<keyword id="KW-0548">Nucleotidyltransferase</keyword>
<keyword id="KW-0934">Plastid</keyword>
<keyword id="KW-0804">Transcription</keyword>
<keyword id="KW-0808">Transferase</keyword>
<reference key="1">
    <citation type="journal article" date="1995" name="Plant Mol. Biol. Rep.">
        <title>Complete nucleotide sequence of the Porphyra purpurea chloroplast genome.</title>
        <authorList>
            <person name="Reith M.E."/>
            <person name="Munholland J."/>
        </authorList>
    </citation>
    <scope>NUCLEOTIDE SEQUENCE [LARGE SCALE GENOMIC DNA]</scope>
    <source>
        <strain>Avonport</strain>
    </source>
</reference>
<protein>
    <recommendedName>
        <fullName>Putative DNA-directed RNA polymerase subunit omega</fullName>
        <shortName>PEP</shortName>
        <ecNumber>2.7.7.6</ecNumber>
    </recommendedName>
    <alternativeName>
        <fullName>Plastid-encoded RNA polymerase omega subunit</fullName>
        <shortName>RNA polymerase omega subunit</shortName>
    </alternativeName>
</protein>
<accession>P51376</accession>
<dbReference type="EC" id="2.7.7.6"/>
<dbReference type="EMBL" id="U38804">
    <property type="protein sequence ID" value="AAC08262.1"/>
    <property type="molecule type" value="Genomic_DNA"/>
</dbReference>
<dbReference type="PIR" id="S73297">
    <property type="entry name" value="S73297"/>
</dbReference>
<dbReference type="RefSeq" id="NP_053986.1">
    <property type="nucleotide sequence ID" value="NC_000925.1"/>
</dbReference>
<dbReference type="SMR" id="P51376"/>
<dbReference type="GeneID" id="1457264"/>
<dbReference type="GO" id="GO:0009507">
    <property type="term" value="C:chloroplast"/>
    <property type="evidence" value="ECO:0007669"/>
    <property type="project" value="UniProtKB-SubCell"/>
</dbReference>
<dbReference type="GO" id="GO:0000428">
    <property type="term" value="C:DNA-directed RNA polymerase complex"/>
    <property type="evidence" value="ECO:0007669"/>
    <property type="project" value="UniProtKB-KW"/>
</dbReference>
<dbReference type="GO" id="GO:0005739">
    <property type="term" value="C:mitochondrion"/>
    <property type="evidence" value="ECO:0007669"/>
    <property type="project" value="GOC"/>
</dbReference>
<dbReference type="GO" id="GO:0003677">
    <property type="term" value="F:DNA binding"/>
    <property type="evidence" value="ECO:0007669"/>
    <property type="project" value="UniProtKB-UniRule"/>
</dbReference>
<dbReference type="GO" id="GO:0003899">
    <property type="term" value="F:DNA-directed RNA polymerase activity"/>
    <property type="evidence" value="ECO:0007669"/>
    <property type="project" value="UniProtKB-UniRule"/>
</dbReference>
<dbReference type="GO" id="GO:0006351">
    <property type="term" value="P:DNA-templated transcription"/>
    <property type="evidence" value="ECO:0007669"/>
    <property type="project" value="UniProtKB-UniRule"/>
</dbReference>
<dbReference type="HAMAP" id="MF_00366">
    <property type="entry name" value="RNApol_bact_RpoZ"/>
    <property type="match status" value="1"/>
</dbReference>
<dbReference type="InterPro" id="IPR003716">
    <property type="entry name" value="DNA-dir_RNA_pol_omega"/>
</dbReference>
<dbReference type="InterPro" id="IPR006110">
    <property type="entry name" value="Pol_omega/Rpo6/RPB6"/>
</dbReference>
<dbReference type="InterPro" id="IPR036161">
    <property type="entry name" value="RPB6/omega-like_sf"/>
</dbReference>
<dbReference type="NCBIfam" id="NF001574">
    <property type="entry name" value="PRK00392.2-5"/>
    <property type="match status" value="1"/>
</dbReference>
<dbReference type="Pfam" id="PF01192">
    <property type="entry name" value="RNA_pol_Rpb6"/>
    <property type="match status" value="1"/>
</dbReference>
<dbReference type="SUPFAM" id="SSF63562">
    <property type="entry name" value="RPB6/omega subunit-like"/>
    <property type="match status" value="1"/>
</dbReference>